<evidence type="ECO:0000255" key="1">
    <source>
        <dbReference type="HAMAP-Rule" id="MF_00294"/>
    </source>
</evidence>
<evidence type="ECO:0000305" key="2"/>
<organism>
    <name type="scientific">Mycobacterium tuberculosis (strain CDC 1551 / Oshkosh)</name>
    <dbReference type="NCBI Taxonomy" id="83331"/>
    <lineage>
        <taxon>Bacteria</taxon>
        <taxon>Bacillati</taxon>
        <taxon>Actinomycetota</taxon>
        <taxon>Actinomycetes</taxon>
        <taxon>Mycobacteriales</taxon>
        <taxon>Mycobacteriaceae</taxon>
        <taxon>Mycobacterium</taxon>
        <taxon>Mycobacterium tuberculosis complex</taxon>
    </lineage>
</organism>
<keyword id="KW-1185">Reference proteome</keyword>
<keyword id="KW-0687">Ribonucleoprotein</keyword>
<keyword id="KW-0689">Ribosomal protein</keyword>
<reference key="1">
    <citation type="journal article" date="2002" name="J. Bacteriol.">
        <title>Whole-genome comparison of Mycobacterium tuberculosis clinical and laboratory strains.</title>
        <authorList>
            <person name="Fleischmann R.D."/>
            <person name="Alland D."/>
            <person name="Eisen J.A."/>
            <person name="Carpenter L."/>
            <person name="White O."/>
            <person name="Peterson J.D."/>
            <person name="DeBoy R.T."/>
            <person name="Dodson R.J."/>
            <person name="Gwinn M.L."/>
            <person name="Haft D.H."/>
            <person name="Hickey E.K."/>
            <person name="Kolonay J.F."/>
            <person name="Nelson W.C."/>
            <person name="Umayam L.A."/>
            <person name="Ermolaeva M.D."/>
            <person name="Salzberg S.L."/>
            <person name="Delcher A."/>
            <person name="Utterback T.R."/>
            <person name="Weidman J.F."/>
            <person name="Khouri H.M."/>
            <person name="Gill J."/>
            <person name="Mikula A."/>
            <person name="Bishai W."/>
            <person name="Jacobs W.R. Jr."/>
            <person name="Venter J.C."/>
            <person name="Fraser C.M."/>
        </authorList>
    </citation>
    <scope>NUCLEOTIDE SEQUENCE [LARGE SCALE GENOMIC DNA]</scope>
    <source>
        <strain>CDC 1551 / Oshkosh</strain>
    </source>
</reference>
<proteinExistence type="inferred from homology"/>
<sequence>MARTDIRPIVKLRSTAGTGYTYTTRKNRRNDPDRLILRKYDPILRRHVDFREER</sequence>
<feature type="chain" id="PRO_0000428225" description="Large ribosomal subunit protein bL33A">
    <location>
        <begin position="1"/>
        <end position="54"/>
    </location>
</feature>
<comment type="similarity">
    <text evidence="2">Belongs to the bacterial ribosomal protein bL33 family.</text>
</comment>
<protein>
    <recommendedName>
        <fullName evidence="1">Large ribosomal subunit protein bL33A</fullName>
    </recommendedName>
    <alternativeName>
        <fullName>50S ribosomal protein L33 1</fullName>
    </alternativeName>
</protein>
<gene>
    <name type="primary">rpmG1</name>
    <name type="synonym">rpmG</name>
    <name type="ordered locus">MT2117.1</name>
</gene>
<name>RL331_MYCTO</name>
<accession>P9WH96</accession>
<accession>L0TB79</accession>
<accession>O86356</accession>
<accession>P0A5W0</accession>
<dbReference type="EMBL" id="AE000516">
    <property type="protein sequence ID" value="AAK46397.1"/>
    <property type="molecule type" value="Genomic_DNA"/>
</dbReference>
<dbReference type="PIR" id="H70945">
    <property type="entry name" value="H70945"/>
</dbReference>
<dbReference type="RefSeq" id="WP_003410628.1">
    <property type="nucleotide sequence ID" value="NZ_KK341227.1"/>
</dbReference>
<dbReference type="SMR" id="P9WH96"/>
<dbReference type="GeneID" id="45426035"/>
<dbReference type="KEGG" id="mtc:MT2117.1"/>
<dbReference type="PATRIC" id="fig|83331.31.peg.2284"/>
<dbReference type="HOGENOM" id="CLU_190949_1_1_11"/>
<dbReference type="Proteomes" id="UP000001020">
    <property type="component" value="Chromosome"/>
</dbReference>
<dbReference type="GO" id="GO:0022625">
    <property type="term" value="C:cytosolic large ribosomal subunit"/>
    <property type="evidence" value="ECO:0007669"/>
    <property type="project" value="TreeGrafter"/>
</dbReference>
<dbReference type="GO" id="GO:0003735">
    <property type="term" value="F:structural constituent of ribosome"/>
    <property type="evidence" value="ECO:0007669"/>
    <property type="project" value="InterPro"/>
</dbReference>
<dbReference type="GO" id="GO:0006412">
    <property type="term" value="P:translation"/>
    <property type="evidence" value="ECO:0007669"/>
    <property type="project" value="UniProtKB-UniRule"/>
</dbReference>
<dbReference type="FunFam" id="2.20.28.120:FF:000002">
    <property type="entry name" value="50S ribosomal protein L33"/>
    <property type="match status" value="1"/>
</dbReference>
<dbReference type="Gene3D" id="2.20.28.120">
    <property type="entry name" value="Ribosomal protein L33"/>
    <property type="match status" value="1"/>
</dbReference>
<dbReference type="HAMAP" id="MF_00294">
    <property type="entry name" value="Ribosomal_bL33"/>
    <property type="match status" value="1"/>
</dbReference>
<dbReference type="InterPro" id="IPR001705">
    <property type="entry name" value="Ribosomal_bL33"/>
</dbReference>
<dbReference type="InterPro" id="IPR018264">
    <property type="entry name" value="Ribosomal_bL33_CS"/>
</dbReference>
<dbReference type="InterPro" id="IPR038584">
    <property type="entry name" value="Ribosomal_bL33_sf"/>
</dbReference>
<dbReference type="InterPro" id="IPR011332">
    <property type="entry name" value="Ribosomal_zn-bd"/>
</dbReference>
<dbReference type="NCBIfam" id="NF001860">
    <property type="entry name" value="PRK00595.1"/>
    <property type="match status" value="1"/>
</dbReference>
<dbReference type="NCBIfam" id="TIGR01023">
    <property type="entry name" value="rpmG_bact"/>
    <property type="match status" value="1"/>
</dbReference>
<dbReference type="PANTHER" id="PTHR15238">
    <property type="entry name" value="54S RIBOSOMAL PROTEIN L39, MITOCHONDRIAL"/>
    <property type="match status" value="1"/>
</dbReference>
<dbReference type="PANTHER" id="PTHR15238:SF1">
    <property type="entry name" value="LARGE RIBOSOMAL SUBUNIT PROTEIN BL33M"/>
    <property type="match status" value="1"/>
</dbReference>
<dbReference type="Pfam" id="PF00471">
    <property type="entry name" value="Ribosomal_L33"/>
    <property type="match status" value="1"/>
</dbReference>
<dbReference type="SUPFAM" id="SSF57829">
    <property type="entry name" value="Zn-binding ribosomal proteins"/>
    <property type="match status" value="1"/>
</dbReference>
<dbReference type="PROSITE" id="PS00582">
    <property type="entry name" value="RIBOSOMAL_L33"/>
    <property type="match status" value="1"/>
</dbReference>